<reference key="1">
    <citation type="journal article" date="2003" name="Nat. Genet.">
        <title>Comparative analysis of the genome sequences of Bordetella pertussis, Bordetella parapertussis and Bordetella bronchiseptica.</title>
        <authorList>
            <person name="Parkhill J."/>
            <person name="Sebaihia M."/>
            <person name="Preston A."/>
            <person name="Murphy L.D."/>
            <person name="Thomson N.R."/>
            <person name="Harris D.E."/>
            <person name="Holden M.T.G."/>
            <person name="Churcher C.M."/>
            <person name="Bentley S.D."/>
            <person name="Mungall K.L."/>
            <person name="Cerdeno-Tarraga A.-M."/>
            <person name="Temple L."/>
            <person name="James K.D."/>
            <person name="Harris B."/>
            <person name="Quail M.A."/>
            <person name="Achtman M."/>
            <person name="Atkin R."/>
            <person name="Baker S."/>
            <person name="Basham D."/>
            <person name="Bason N."/>
            <person name="Cherevach I."/>
            <person name="Chillingworth T."/>
            <person name="Collins M."/>
            <person name="Cronin A."/>
            <person name="Davis P."/>
            <person name="Doggett J."/>
            <person name="Feltwell T."/>
            <person name="Goble A."/>
            <person name="Hamlin N."/>
            <person name="Hauser H."/>
            <person name="Holroyd S."/>
            <person name="Jagels K."/>
            <person name="Leather S."/>
            <person name="Moule S."/>
            <person name="Norberczak H."/>
            <person name="O'Neil S."/>
            <person name="Ormond D."/>
            <person name="Price C."/>
            <person name="Rabbinowitsch E."/>
            <person name="Rutter S."/>
            <person name="Sanders M."/>
            <person name="Saunders D."/>
            <person name="Seeger K."/>
            <person name="Sharp S."/>
            <person name="Simmonds M."/>
            <person name="Skelton J."/>
            <person name="Squares R."/>
            <person name="Squares S."/>
            <person name="Stevens K."/>
            <person name="Unwin L."/>
            <person name="Whitehead S."/>
            <person name="Barrell B.G."/>
            <person name="Maskell D.J."/>
        </authorList>
    </citation>
    <scope>NUCLEOTIDE SEQUENCE [LARGE SCALE GENOMIC DNA]</scope>
    <source>
        <strain>Tohama I / ATCC BAA-589 / NCTC 13251</strain>
    </source>
</reference>
<comment type="function">
    <text evidence="1">NDH-1 shuttles electrons from NADH, via FMN and iron-sulfur (Fe-S) centers, to quinones in the respiratory chain. The immediate electron acceptor for the enzyme in this species is believed to be ubiquinone. Couples the redox reaction to proton translocation (for every two electrons transferred, four hydrogen ions are translocated across the cytoplasmic membrane), and thus conserves the redox energy in a proton gradient.</text>
</comment>
<comment type="catalytic activity">
    <reaction evidence="1">
        <text>a quinone + NADH + 5 H(+)(in) = a quinol + NAD(+) + 4 H(+)(out)</text>
        <dbReference type="Rhea" id="RHEA:57888"/>
        <dbReference type="ChEBI" id="CHEBI:15378"/>
        <dbReference type="ChEBI" id="CHEBI:24646"/>
        <dbReference type="ChEBI" id="CHEBI:57540"/>
        <dbReference type="ChEBI" id="CHEBI:57945"/>
        <dbReference type="ChEBI" id="CHEBI:132124"/>
    </reaction>
</comment>
<comment type="cofactor">
    <cofactor evidence="1">
        <name>[4Fe-4S] cluster</name>
        <dbReference type="ChEBI" id="CHEBI:49883"/>
    </cofactor>
    <text evidence="1">Binds 2 [4Fe-4S] clusters per subunit.</text>
</comment>
<comment type="subunit">
    <text evidence="1">NDH-1 is composed of 14 different subunits. Subunits NuoA, H, J, K, L, M, N constitute the membrane sector of the complex.</text>
</comment>
<comment type="subcellular location">
    <subcellularLocation>
        <location evidence="1">Cell inner membrane</location>
        <topology evidence="1">Peripheral membrane protein</topology>
    </subcellularLocation>
</comment>
<comment type="similarity">
    <text evidence="1">Belongs to the complex I 23 kDa subunit family.</text>
</comment>
<protein>
    <recommendedName>
        <fullName evidence="1">NADH-quinone oxidoreductase subunit I</fullName>
        <ecNumber evidence="1">7.1.1.-</ecNumber>
    </recommendedName>
    <alternativeName>
        <fullName evidence="1">NADH dehydrogenase I subunit I</fullName>
    </alternativeName>
    <alternativeName>
        <fullName evidence="1">NDH-1 subunit I</fullName>
    </alternativeName>
</protein>
<evidence type="ECO:0000255" key="1">
    <source>
        <dbReference type="HAMAP-Rule" id="MF_01351"/>
    </source>
</evidence>
<name>NUOI_BORPE</name>
<feature type="chain" id="PRO_0000250881" description="NADH-quinone oxidoreductase subunit I">
    <location>
        <begin position="1"/>
        <end position="162"/>
    </location>
</feature>
<feature type="domain" description="4Fe-4S ferredoxin-type 1" evidence="1">
    <location>
        <begin position="53"/>
        <end position="83"/>
    </location>
</feature>
<feature type="domain" description="4Fe-4S ferredoxin-type 2" evidence="1">
    <location>
        <begin position="93"/>
        <end position="122"/>
    </location>
</feature>
<feature type="binding site" evidence="1">
    <location>
        <position position="63"/>
    </location>
    <ligand>
        <name>[4Fe-4S] cluster</name>
        <dbReference type="ChEBI" id="CHEBI:49883"/>
        <label>1</label>
    </ligand>
</feature>
<feature type="binding site" evidence="1">
    <location>
        <position position="66"/>
    </location>
    <ligand>
        <name>[4Fe-4S] cluster</name>
        <dbReference type="ChEBI" id="CHEBI:49883"/>
        <label>1</label>
    </ligand>
</feature>
<feature type="binding site" evidence="1">
    <location>
        <position position="69"/>
    </location>
    <ligand>
        <name>[4Fe-4S] cluster</name>
        <dbReference type="ChEBI" id="CHEBI:49883"/>
        <label>1</label>
    </ligand>
</feature>
<feature type="binding site" evidence="1">
    <location>
        <position position="73"/>
    </location>
    <ligand>
        <name>[4Fe-4S] cluster</name>
        <dbReference type="ChEBI" id="CHEBI:49883"/>
        <label>2</label>
    </ligand>
</feature>
<feature type="binding site" evidence="1">
    <location>
        <position position="102"/>
    </location>
    <ligand>
        <name>[4Fe-4S] cluster</name>
        <dbReference type="ChEBI" id="CHEBI:49883"/>
        <label>2</label>
    </ligand>
</feature>
<feature type="binding site" evidence="1">
    <location>
        <position position="105"/>
    </location>
    <ligand>
        <name>[4Fe-4S] cluster</name>
        <dbReference type="ChEBI" id="CHEBI:49883"/>
        <label>2</label>
    </ligand>
</feature>
<feature type="binding site" evidence="1">
    <location>
        <position position="108"/>
    </location>
    <ligand>
        <name>[4Fe-4S] cluster</name>
        <dbReference type="ChEBI" id="CHEBI:49883"/>
        <label>2</label>
    </ligand>
</feature>
<feature type="binding site" evidence="1">
    <location>
        <position position="112"/>
    </location>
    <ligand>
        <name>[4Fe-4S] cluster</name>
        <dbReference type="ChEBI" id="CHEBI:49883"/>
        <label>1</label>
    </ligand>
</feature>
<gene>
    <name evidence="1" type="primary">nuoI</name>
    <name type="ordered locus">BP0849</name>
</gene>
<organism>
    <name type="scientific">Bordetella pertussis (strain Tohama I / ATCC BAA-589 / NCTC 13251)</name>
    <dbReference type="NCBI Taxonomy" id="257313"/>
    <lineage>
        <taxon>Bacteria</taxon>
        <taxon>Pseudomonadati</taxon>
        <taxon>Pseudomonadota</taxon>
        <taxon>Betaproteobacteria</taxon>
        <taxon>Burkholderiales</taxon>
        <taxon>Alcaligenaceae</taxon>
        <taxon>Bordetella</taxon>
    </lineage>
</organism>
<dbReference type="EC" id="7.1.1.-" evidence="1"/>
<dbReference type="EMBL" id="BX640413">
    <property type="protein sequence ID" value="CAE41152.1"/>
    <property type="molecule type" value="Genomic_DNA"/>
</dbReference>
<dbReference type="RefSeq" id="NP_879659.1">
    <property type="nucleotide sequence ID" value="NC_002929.2"/>
</dbReference>
<dbReference type="RefSeq" id="WP_003813924.1">
    <property type="nucleotide sequence ID" value="NZ_CP039022.1"/>
</dbReference>
<dbReference type="SMR" id="Q7VZP7"/>
<dbReference type="STRING" id="257313.BP0849"/>
<dbReference type="PaxDb" id="257313-BP0849"/>
<dbReference type="GeneID" id="93205166"/>
<dbReference type="KEGG" id="bpe:BP0849"/>
<dbReference type="PATRIC" id="fig|257313.5.peg.903"/>
<dbReference type="eggNOG" id="COG1143">
    <property type="taxonomic scope" value="Bacteria"/>
</dbReference>
<dbReference type="HOGENOM" id="CLU_067218_5_1_4"/>
<dbReference type="Proteomes" id="UP000002676">
    <property type="component" value="Chromosome"/>
</dbReference>
<dbReference type="GO" id="GO:0005886">
    <property type="term" value="C:plasma membrane"/>
    <property type="evidence" value="ECO:0007669"/>
    <property type="project" value="UniProtKB-SubCell"/>
</dbReference>
<dbReference type="GO" id="GO:0051539">
    <property type="term" value="F:4 iron, 4 sulfur cluster binding"/>
    <property type="evidence" value="ECO:0007669"/>
    <property type="project" value="UniProtKB-KW"/>
</dbReference>
<dbReference type="GO" id="GO:0005506">
    <property type="term" value="F:iron ion binding"/>
    <property type="evidence" value="ECO:0007669"/>
    <property type="project" value="UniProtKB-UniRule"/>
</dbReference>
<dbReference type="GO" id="GO:0050136">
    <property type="term" value="F:NADH:ubiquinone reductase (non-electrogenic) activity"/>
    <property type="evidence" value="ECO:0007669"/>
    <property type="project" value="UniProtKB-UniRule"/>
</dbReference>
<dbReference type="GO" id="GO:0048038">
    <property type="term" value="F:quinone binding"/>
    <property type="evidence" value="ECO:0007669"/>
    <property type="project" value="UniProtKB-KW"/>
</dbReference>
<dbReference type="GO" id="GO:0009060">
    <property type="term" value="P:aerobic respiration"/>
    <property type="evidence" value="ECO:0007669"/>
    <property type="project" value="TreeGrafter"/>
</dbReference>
<dbReference type="FunFam" id="3.30.70.3270:FF:000003">
    <property type="entry name" value="NADH-quinone oxidoreductase subunit I"/>
    <property type="match status" value="1"/>
</dbReference>
<dbReference type="Gene3D" id="3.30.70.3270">
    <property type="match status" value="1"/>
</dbReference>
<dbReference type="HAMAP" id="MF_01351">
    <property type="entry name" value="NDH1_NuoI"/>
    <property type="match status" value="1"/>
</dbReference>
<dbReference type="InterPro" id="IPR017896">
    <property type="entry name" value="4Fe4S_Fe-S-bd"/>
</dbReference>
<dbReference type="InterPro" id="IPR017900">
    <property type="entry name" value="4Fe4S_Fe_S_CS"/>
</dbReference>
<dbReference type="InterPro" id="IPR010226">
    <property type="entry name" value="NADH_quinone_OxRdtase_chainI"/>
</dbReference>
<dbReference type="NCBIfam" id="TIGR01971">
    <property type="entry name" value="NuoI"/>
    <property type="match status" value="1"/>
</dbReference>
<dbReference type="NCBIfam" id="NF004538">
    <property type="entry name" value="PRK05888.1-4"/>
    <property type="match status" value="1"/>
</dbReference>
<dbReference type="NCBIfam" id="NF004539">
    <property type="entry name" value="PRK05888.1-5"/>
    <property type="match status" value="1"/>
</dbReference>
<dbReference type="PANTHER" id="PTHR10849:SF20">
    <property type="entry name" value="NADH DEHYDROGENASE [UBIQUINONE] IRON-SULFUR PROTEIN 8, MITOCHONDRIAL"/>
    <property type="match status" value="1"/>
</dbReference>
<dbReference type="PANTHER" id="PTHR10849">
    <property type="entry name" value="NADH DEHYDROGENASE UBIQUINONE IRON-SULFUR PROTEIN 8, MITOCHONDRIAL"/>
    <property type="match status" value="1"/>
</dbReference>
<dbReference type="Pfam" id="PF12838">
    <property type="entry name" value="Fer4_7"/>
    <property type="match status" value="1"/>
</dbReference>
<dbReference type="SUPFAM" id="SSF54862">
    <property type="entry name" value="4Fe-4S ferredoxins"/>
    <property type="match status" value="1"/>
</dbReference>
<dbReference type="PROSITE" id="PS00198">
    <property type="entry name" value="4FE4S_FER_1"/>
    <property type="match status" value="2"/>
</dbReference>
<dbReference type="PROSITE" id="PS51379">
    <property type="entry name" value="4FE4S_FER_2"/>
    <property type="match status" value="2"/>
</dbReference>
<sequence>MEAIKDFFGSLLLTELFKGLRLTGKYFFKRKVTLRYPMEKTPTSARFRGLHALRRYPNGEERCIACKLCEAVCPALAITIESEQRDDGTRRTTRYDIDLTKCIFCGFCEESCPVDSIVETHIHEYHGEKRGDLYFTKDMLLAVGDRYEAEIARRRAEDAPYR</sequence>
<accession>Q7VZP7</accession>
<proteinExistence type="inferred from homology"/>
<keyword id="KW-0004">4Fe-4S</keyword>
<keyword id="KW-0997">Cell inner membrane</keyword>
<keyword id="KW-1003">Cell membrane</keyword>
<keyword id="KW-0408">Iron</keyword>
<keyword id="KW-0411">Iron-sulfur</keyword>
<keyword id="KW-0472">Membrane</keyword>
<keyword id="KW-0479">Metal-binding</keyword>
<keyword id="KW-0520">NAD</keyword>
<keyword id="KW-0874">Quinone</keyword>
<keyword id="KW-1185">Reference proteome</keyword>
<keyword id="KW-0677">Repeat</keyword>
<keyword id="KW-1278">Translocase</keyword>
<keyword id="KW-0830">Ubiquinone</keyword>